<name>TRUA_ARCFU</name>
<dbReference type="EC" id="5.4.99.12" evidence="1"/>
<dbReference type="EMBL" id="AE000782">
    <property type="protein sequence ID" value="AAB89516.1"/>
    <property type="molecule type" value="Genomic_DNA"/>
</dbReference>
<dbReference type="PIR" id="A69466">
    <property type="entry name" value="A69466"/>
</dbReference>
<dbReference type="SMR" id="O28544"/>
<dbReference type="STRING" id="224325.AF_1730"/>
<dbReference type="PaxDb" id="224325-AF_1730"/>
<dbReference type="EnsemblBacteria" id="AAB89516">
    <property type="protein sequence ID" value="AAB89516"/>
    <property type="gene ID" value="AF_1730"/>
</dbReference>
<dbReference type="KEGG" id="afu:AF_1730"/>
<dbReference type="eggNOG" id="arCOG04449">
    <property type="taxonomic scope" value="Archaea"/>
</dbReference>
<dbReference type="HOGENOM" id="CLU_014673_4_2_2"/>
<dbReference type="OrthoDB" id="25720at2157"/>
<dbReference type="PhylomeDB" id="O28544"/>
<dbReference type="Proteomes" id="UP000002199">
    <property type="component" value="Chromosome"/>
</dbReference>
<dbReference type="GO" id="GO:0003723">
    <property type="term" value="F:RNA binding"/>
    <property type="evidence" value="ECO:0007669"/>
    <property type="project" value="InterPro"/>
</dbReference>
<dbReference type="GO" id="GO:0160147">
    <property type="term" value="F:tRNA pseudouridine(38-40) synthase activity"/>
    <property type="evidence" value="ECO:0007669"/>
    <property type="project" value="UniProtKB-EC"/>
</dbReference>
<dbReference type="GO" id="GO:0031119">
    <property type="term" value="P:tRNA pseudouridine synthesis"/>
    <property type="evidence" value="ECO:0007669"/>
    <property type="project" value="UniProtKB-UniRule"/>
</dbReference>
<dbReference type="CDD" id="cd02866">
    <property type="entry name" value="PseudoU_synth_TruA_Archea"/>
    <property type="match status" value="1"/>
</dbReference>
<dbReference type="FunFam" id="3.30.70.580:FF:000001">
    <property type="entry name" value="tRNA pseudouridine synthase A"/>
    <property type="match status" value="1"/>
</dbReference>
<dbReference type="Gene3D" id="3.30.70.660">
    <property type="entry name" value="Pseudouridine synthase I, catalytic domain, C-terminal subdomain"/>
    <property type="match status" value="1"/>
</dbReference>
<dbReference type="Gene3D" id="3.30.70.580">
    <property type="entry name" value="Pseudouridine synthase I, catalytic domain, N-terminal subdomain"/>
    <property type="match status" value="1"/>
</dbReference>
<dbReference type="HAMAP" id="MF_00171">
    <property type="entry name" value="TruA"/>
    <property type="match status" value="1"/>
</dbReference>
<dbReference type="InterPro" id="IPR020103">
    <property type="entry name" value="PsdUridine_synth_cat_dom_sf"/>
</dbReference>
<dbReference type="InterPro" id="IPR001406">
    <property type="entry name" value="PsdUridine_synth_TruA"/>
</dbReference>
<dbReference type="InterPro" id="IPR020097">
    <property type="entry name" value="PsdUridine_synth_TruA_a/b_dom"/>
</dbReference>
<dbReference type="InterPro" id="IPR020095">
    <property type="entry name" value="PsdUridine_synth_TruA_C"/>
</dbReference>
<dbReference type="InterPro" id="IPR020094">
    <property type="entry name" value="TruA/RsuA/RluB/E/F_N"/>
</dbReference>
<dbReference type="NCBIfam" id="TIGR00071">
    <property type="entry name" value="hisT_truA"/>
    <property type="match status" value="1"/>
</dbReference>
<dbReference type="PANTHER" id="PTHR11142">
    <property type="entry name" value="PSEUDOURIDYLATE SYNTHASE"/>
    <property type="match status" value="1"/>
</dbReference>
<dbReference type="PANTHER" id="PTHR11142:SF0">
    <property type="entry name" value="TRNA PSEUDOURIDINE SYNTHASE-LIKE 1"/>
    <property type="match status" value="1"/>
</dbReference>
<dbReference type="Pfam" id="PF01416">
    <property type="entry name" value="PseudoU_synth_1"/>
    <property type="match status" value="1"/>
</dbReference>
<dbReference type="PIRSF" id="PIRSF001430">
    <property type="entry name" value="tRNA_psdUrid_synth"/>
    <property type="match status" value="1"/>
</dbReference>
<dbReference type="SUPFAM" id="SSF55120">
    <property type="entry name" value="Pseudouridine synthase"/>
    <property type="match status" value="1"/>
</dbReference>
<evidence type="ECO:0000255" key="1">
    <source>
        <dbReference type="HAMAP-Rule" id="MF_00171"/>
    </source>
</evidence>
<comment type="function">
    <text evidence="1">Formation of pseudouridine at positions 38, 39 and 40 in the anticodon stem and loop of transfer RNAs.</text>
</comment>
<comment type="catalytic activity">
    <reaction evidence="1">
        <text>uridine(38/39/40) in tRNA = pseudouridine(38/39/40) in tRNA</text>
        <dbReference type="Rhea" id="RHEA:22376"/>
        <dbReference type="Rhea" id="RHEA-COMP:10085"/>
        <dbReference type="Rhea" id="RHEA-COMP:10087"/>
        <dbReference type="ChEBI" id="CHEBI:65314"/>
        <dbReference type="ChEBI" id="CHEBI:65315"/>
        <dbReference type="EC" id="5.4.99.12"/>
    </reaction>
</comment>
<comment type="similarity">
    <text evidence="1">Belongs to the tRNA pseudouridine synthase TruA family.</text>
</comment>
<gene>
    <name evidence="1" type="primary">truA</name>
    <name type="ordered locus">AF_1730</name>
</gene>
<feature type="chain" id="PRO_0000057499" description="tRNA pseudouridine synthase A">
    <location>
        <begin position="1"/>
        <end position="265"/>
    </location>
</feature>
<feature type="active site" description="Nucleophile" evidence="1">
    <location>
        <position position="52"/>
    </location>
</feature>
<feature type="binding site" evidence="1">
    <location>
        <position position="105"/>
    </location>
    <ligand>
        <name>substrate</name>
    </ligand>
</feature>
<sequence length="265" mass="30830">MMKFAFKIAYFGDNFHGSQFQPDQRTVEGEVINALRRLGVENPRLRSAGRTDAGVHAYGQVISFYSEDKIFPRMLNAELPEDITAWAWAKVSEDFDPRRAKSRVYTYVMYGSDYDISAMRKAVKELIGVHDFSNFTKKFGEGESCVREIISADIRADREFIIFEIEGNAFTWNMVRCIVTAIMEIGKQHRSIEWFRDLLNPEKHKERVEPAPPYGLILKDVKYDDVEFEIDDYAFKTLQSRIEDRIIYHGTIFKLFSLFRQSGIS</sequence>
<keyword id="KW-0413">Isomerase</keyword>
<keyword id="KW-1185">Reference proteome</keyword>
<keyword id="KW-0819">tRNA processing</keyword>
<organism>
    <name type="scientific">Archaeoglobus fulgidus (strain ATCC 49558 / DSM 4304 / JCM 9628 / NBRC 100126 / VC-16)</name>
    <dbReference type="NCBI Taxonomy" id="224325"/>
    <lineage>
        <taxon>Archaea</taxon>
        <taxon>Methanobacteriati</taxon>
        <taxon>Methanobacteriota</taxon>
        <taxon>Archaeoglobi</taxon>
        <taxon>Archaeoglobales</taxon>
        <taxon>Archaeoglobaceae</taxon>
        <taxon>Archaeoglobus</taxon>
    </lineage>
</organism>
<protein>
    <recommendedName>
        <fullName evidence="1">tRNA pseudouridine synthase A</fullName>
        <ecNumber evidence="1">5.4.99.12</ecNumber>
    </recommendedName>
    <alternativeName>
        <fullName evidence="1">tRNA pseudouridine(38-40) synthase</fullName>
    </alternativeName>
    <alternativeName>
        <fullName evidence="1">tRNA pseudouridylate synthase I</fullName>
    </alternativeName>
    <alternativeName>
        <fullName evidence="1">tRNA-uridine isomerase I</fullName>
    </alternativeName>
</protein>
<accession>O28544</accession>
<proteinExistence type="inferred from homology"/>
<reference key="1">
    <citation type="journal article" date="1997" name="Nature">
        <title>The complete genome sequence of the hyperthermophilic, sulphate-reducing archaeon Archaeoglobus fulgidus.</title>
        <authorList>
            <person name="Klenk H.-P."/>
            <person name="Clayton R.A."/>
            <person name="Tomb J.-F."/>
            <person name="White O."/>
            <person name="Nelson K.E."/>
            <person name="Ketchum K.A."/>
            <person name="Dodson R.J."/>
            <person name="Gwinn M.L."/>
            <person name="Hickey E.K."/>
            <person name="Peterson J.D."/>
            <person name="Richardson D.L."/>
            <person name="Kerlavage A.R."/>
            <person name="Graham D.E."/>
            <person name="Kyrpides N.C."/>
            <person name="Fleischmann R.D."/>
            <person name="Quackenbush J."/>
            <person name="Lee N.H."/>
            <person name="Sutton G.G."/>
            <person name="Gill S.R."/>
            <person name="Kirkness E.F."/>
            <person name="Dougherty B.A."/>
            <person name="McKenney K."/>
            <person name="Adams M.D."/>
            <person name="Loftus B.J."/>
            <person name="Peterson S.N."/>
            <person name="Reich C.I."/>
            <person name="McNeil L.K."/>
            <person name="Badger J.H."/>
            <person name="Glodek A."/>
            <person name="Zhou L."/>
            <person name="Overbeek R."/>
            <person name="Gocayne J.D."/>
            <person name="Weidman J.F."/>
            <person name="McDonald L.A."/>
            <person name="Utterback T.R."/>
            <person name="Cotton M.D."/>
            <person name="Spriggs T."/>
            <person name="Artiach P."/>
            <person name="Kaine B.P."/>
            <person name="Sykes S.M."/>
            <person name="Sadow P.W."/>
            <person name="D'Andrea K.P."/>
            <person name="Bowman C."/>
            <person name="Fujii C."/>
            <person name="Garland S.A."/>
            <person name="Mason T.M."/>
            <person name="Olsen G.J."/>
            <person name="Fraser C.M."/>
            <person name="Smith H.O."/>
            <person name="Woese C.R."/>
            <person name="Venter J.C."/>
        </authorList>
    </citation>
    <scope>NUCLEOTIDE SEQUENCE [LARGE SCALE GENOMIC DNA]</scope>
    <source>
        <strain>ATCC 49558 / DSM 4304 / JCM 9628 / NBRC 100126 / VC-16</strain>
    </source>
</reference>